<organism>
    <name type="scientific">Escherichia coli O6:H1 (strain CFT073 / ATCC 700928 / UPEC)</name>
    <dbReference type="NCBI Taxonomy" id="199310"/>
    <lineage>
        <taxon>Bacteria</taxon>
        <taxon>Pseudomonadati</taxon>
        <taxon>Pseudomonadota</taxon>
        <taxon>Gammaproteobacteria</taxon>
        <taxon>Enterobacterales</taxon>
        <taxon>Enterobacteriaceae</taxon>
        <taxon>Escherichia</taxon>
    </lineage>
</organism>
<comment type="similarity">
    <text evidence="2">Belongs to the VapA/VapI family.</text>
</comment>
<name>YBAQ_ECOL6</name>
<gene>
    <name type="primary">ybaQ</name>
    <name type="ordered locus">c0603</name>
</gene>
<feature type="chain" id="PRO_0000149754" description="Uncharacterized HTH-type transcriptional regulator YbaQ">
    <location>
        <begin position="1"/>
        <end position="113"/>
    </location>
</feature>
<feature type="domain" description="HTH cro/C1-type" evidence="1">
    <location>
        <begin position="16"/>
        <end position="70"/>
    </location>
</feature>
<feature type="DNA-binding region" description="H-T-H motif" evidence="1">
    <location>
        <begin position="27"/>
        <end position="46"/>
    </location>
</feature>
<reference key="1">
    <citation type="journal article" date="2002" name="Proc. Natl. Acad. Sci. U.S.A.">
        <title>Extensive mosaic structure revealed by the complete genome sequence of uropathogenic Escherichia coli.</title>
        <authorList>
            <person name="Welch R.A."/>
            <person name="Burland V."/>
            <person name="Plunkett G. III"/>
            <person name="Redford P."/>
            <person name="Roesch P."/>
            <person name="Rasko D."/>
            <person name="Buckles E.L."/>
            <person name="Liou S.-R."/>
            <person name="Boutin A."/>
            <person name="Hackett J."/>
            <person name="Stroud D."/>
            <person name="Mayhew G.F."/>
            <person name="Rose D.J."/>
            <person name="Zhou S."/>
            <person name="Schwartz D.C."/>
            <person name="Perna N.T."/>
            <person name="Mobley H.L.T."/>
            <person name="Donnenberg M.S."/>
            <person name="Blattner F.R."/>
        </authorList>
    </citation>
    <scope>NUCLEOTIDE SEQUENCE [LARGE SCALE GENOMIC DNA]</scope>
    <source>
        <strain>CFT073 / ATCC 700928 / UPEC</strain>
    </source>
</reference>
<accession>P0A9T7</accession>
<accession>P77303</accession>
<accession>Q47008</accession>
<proteinExistence type="inferred from homology"/>
<evidence type="ECO:0000255" key="1">
    <source>
        <dbReference type="PROSITE-ProRule" id="PRU00257"/>
    </source>
</evidence>
<evidence type="ECO:0000305" key="2"/>
<protein>
    <recommendedName>
        <fullName>Uncharacterized HTH-type transcriptional regulator YbaQ</fullName>
    </recommendedName>
</protein>
<dbReference type="EMBL" id="AE014075">
    <property type="protein sequence ID" value="AAN79081.1"/>
    <property type="molecule type" value="Genomic_DNA"/>
</dbReference>
<dbReference type="RefSeq" id="WP_000806442.1">
    <property type="nucleotide sequence ID" value="NZ_CP051263.1"/>
</dbReference>
<dbReference type="SMR" id="P0A9T7"/>
<dbReference type="STRING" id="199310.c0603"/>
<dbReference type="KEGG" id="ecc:c0603"/>
<dbReference type="eggNOG" id="COG3093">
    <property type="taxonomic scope" value="Bacteria"/>
</dbReference>
<dbReference type="HOGENOM" id="CLU_140230_3_2_6"/>
<dbReference type="BioCyc" id="ECOL199310:C0603-MONOMER"/>
<dbReference type="Proteomes" id="UP000001410">
    <property type="component" value="Chromosome"/>
</dbReference>
<dbReference type="GO" id="GO:0003677">
    <property type="term" value="F:DNA binding"/>
    <property type="evidence" value="ECO:0007669"/>
    <property type="project" value="UniProtKB-KW"/>
</dbReference>
<dbReference type="CDD" id="cd00093">
    <property type="entry name" value="HTH_XRE"/>
    <property type="match status" value="1"/>
</dbReference>
<dbReference type="Gene3D" id="1.10.260.40">
    <property type="entry name" value="lambda repressor-like DNA-binding domains"/>
    <property type="match status" value="1"/>
</dbReference>
<dbReference type="InterPro" id="IPR001387">
    <property type="entry name" value="Cro/C1-type_HTH"/>
</dbReference>
<dbReference type="InterPro" id="IPR010982">
    <property type="entry name" value="Lambda_DNA-bd_dom_sf"/>
</dbReference>
<dbReference type="InterPro" id="IPR013430">
    <property type="entry name" value="Toxin_antidote_HigA"/>
</dbReference>
<dbReference type="NCBIfam" id="TIGR02607">
    <property type="entry name" value="antidote_HigA"/>
    <property type="match status" value="1"/>
</dbReference>
<dbReference type="PANTHER" id="PTHR36924">
    <property type="entry name" value="ANTITOXIN HIGA-1"/>
    <property type="match status" value="1"/>
</dbReference>
<dbReference type="PANTHER" id="PTHR36924:SF1">
    <property type="entry name" value="ANTITOXIN HIGA-1"/>
    <property type="match status" value="1"/>
</dbReference>
<dbReference type="Pfam" id="PF01381">
    <property type="entry name" value="HTH_3"/>
    <property type="match status" value="1"/>
</dbReference>
<dbReference type="SMART" id="SM00530">
    <property type="entry name" value="HTH_XRE"/>
    <property type="match status" value="1"/>
</dbReference>
<dbReference type="SUPFAM" id="SSF47413">
    <property type="entry name" value="lambda repressor-like DNA-binding domains"/>
    <property type="match status" value="1"/>
</dbReference>
<dbReference type="PROSITE" id="PS50943">
    <property type="entry name" value="HTH_CROC1"/>
    <property type="match status" value="1"/>
</dbReference>
<keyword id="KW-0238">DNA-binding</keyword>
<keyword id="KW-1185">Reference proteome</keyword>
<keyword id="KW-0804">Transcription</keyword>
<keyword id="KW-0805">Transcription regulation</keyword>
<sequence length="113" mass="13171">MKQATRKPTTPGDILLYEYLEPLDLKINELAELLHVHRNSVSALINNNRKLTTEMAFRLAKVFDTTVDFWLNLQAAVDLWEVENNMRTQEELGRIETVAEYLARREERAKKVA</sequence>